<accession>C5D2V2</accession>
<gene>
    <name evidence="1" type="primary">proA</name>
    <name type="ordered locus">GWCH70_2017</name>
</gene>
<feature type="chain" id="PRO_1000205998" description="Gamma-glutamyl phosphate reductase">
    <location>
        <begin position="1"/>
        <end position="413"/>
    </location>
</feature>
<sequence length="413" mass="45460">MNELLIKAEQLQQAAKTLALLSTEEKNEALTRIAEALIKQKEWILQENEKDVALGKEQGLSPALIDRLQLTNERIEQIVDGVRQVADLPDPIGEIVEEWTRPNGLRIQTIRVPLGVIGMVYEARPNVTVDAASLCLKTGNAVLLRGSSSALHSNKALVHVMKEALRDSAIPADAIQLLEDTSREAAQQMFRLNGYLDVLIPRGGAGLIRSVIENATVPVLETGVGNCHIFIDESAQKQMAIDIVLNAKLQRPSVCNAVETVLIHQNWPYISELVETLHARGVELRGDSQLASSYSFIQQAAETDWSTEYLAPILAVKLVQNVKEAVDHINRYGTKHSEAIISEQNDNVRFFFQAIDAAVLYHNASTRFTDGEQFGYGAEIGISTQKLHARGPMGLRAITTTKSLVYGTGQIRS</sequence>
<keyword id="KW-0028">Amino-acid biosynthesis</keyword>
<keyword id="KW-0963">Cytoplasm</keyword>
<keyword id="KW-0521">NADP</keyword>
<keyword id="KW-0560">Oxidoreductase</keyword>
<keyword id="KW-0641">Proline biosynthesis</keyword>
<dbReference type="EC" id="1.2.1.41" evidence="1"/>
<dbReference type="EMBL" id="CP001638">
    <property type="protein sequence ID" value="ACS24744.1"/>
    <property type="molecule type" value="Genomic_DNA"/>
</dbReference>
<dbReference type="SMR" id="C5D2V2"/>
<dbReference type="STRING" id="471223.GWCH70_2017"/>
<dbReference type="KEGG" id="gwc:GWCH70_2017"/>
<dbReference type="eggNOG" id="COG0014">
    <property type="taxonomic scope" value="Bacteria"/>
</dbReference>
<dbReference type="HOGENOM" id="CLU_030231_0_0_9"/>
<dbReference type="OrthoDB" id="9809970at2"/>
<dbReference type="UniPathway" id="UPA00098">
    <property type="reaction ID" value="UER00360"/>
</dbReference>
<dbReference type="GO" id="GO:0005737">
    <property type="term" value="C:cytoplasm"/>
    <property type="evidence" value="ECO:0007669"/>
    <property type="project" value="UniProtKB-SubCell"/>
</dbReference>
<dbReference type="GO" id="GO:0004350">
    <property type="term" value="F:glutamate-5-semialdehyde dehydrogenase activity"/>
    <property type="evidence" value="ECO:0007669"/>
    <property type="project" value="UniProtKB-UniRule"/>
</dbReference>
<dbReference type="GO" id="GO:0050661">
    <property type="term" value="F:NADP binding"/>
    <property type="evidence" value="ECO:0007669"/>
    <property type="project" value="InterPro"/>
</dbReference>
<dbReference type="GO" id="GO:0055129">
    <property type="term" value="P:L-proline biosynthetic process"/>
    <property type="evidence" value="ECO:0007669"/>
    <property type="project" value="UniProtKB-UniRule"/>
</dbReference>
<dbReference type="CDD" id="cd07079">
    <property type="entry name" value="ALDH_F18-19_ProA-GPR"/>
    <property type="match status" value="1"/>
</dbReference>
<dbReference type="FunFam" id="3.40.309.10:FF:000006">
    <property type="entry name" value="Gamma-glutamyl phosphate reductase"/>
    <property type="match status" value="1"/>
</dbReference>
<dbReference type="Gene3D" id="3.40.605.10">
    <property type="entry name" value="Aldehyde Dehydrogenase, Chain A, domain 1"/>
    <property type="match status" value="1"/>
</dbReference>
<dbReference type="Gene3D" id="3.40.309.10">
    <property type="entry name" value="Aldehyde Dehydrogenase, Chain A, domain 2"/>
    <property type="match status" value="1"/>
</dbReference>
<dbReference type="HAMAP" id="MF_00412">
    <property type="entry name" value="ProA"/>
    <property type="match status" value="1"/>
</dbReference>
<dbReference type="InterPro" id="IPR016161">
    <property type="entry name" value="Ald_DH/histidinol_DH"/>
</dbReference>
<dbReference type="InterPro" id="IPR016163">
    <property type="entry name" value="Ald_DH_C"/>
</dbReference>
<dbReference type="InterPro" id="IPR016162">
    <property type="entry name" value="Ald_DH_N"/>
</dbReference>
<dbReference type="InterPro" id="IPR015590">
    <property type="entry name" value="Aldehyde_DH_dom"/>
</dbReference>
<dbReference type="InterPro" id="IPR020593">
    <property type="entry name" value="G-glutamylP_reductase_CS"/>
</dbReference>
<dbReference type="InterPro" id="IPR012134">
    <property type="entry name" value="Glu-5-SA_DH"/>
</dbReference>
<dbReference type="InterPro" id="IPR000965">
    <property type="entry name" value="GPR_dom"/>
</dbReference>
<dbReference type="NCBIfam" id="NF001221">
    <property type="entry name" value="PRK00197.1"/>
    <property type="match status" value="1"/>
</dbReference>
<dbReference type="NCBIfam" id="TIGR00407">
    <property type="entry name" value="proA"/>
    <property type="match status" value="1"/>
</dbReference>
<dbReference type="PANTHER" id="PTHR11063:SF8">
    <property type="entry name" value="DELTA-1-PYRROLINE-5-CARBOXYLATE SYNTHASE"/>
    <property type="match status" value="1"/>
</dbReference>
<dbReference type="PANTHER" id="PTHR11063">
    <property type="entry name" value="GLUTAMATE SEMIALDEHYDE DEHYDROGENASE"/>
    <property type="match status" value="1"/>
</dbReference>
<dbReference type="Pfam" id="PF00171">
    <property type="entry name" value="Aldedh"/>
    <property type="match status" value="1"/>
</dbReference>
<dbReference type="PIRSF" id="PIRSF000151">
    <property type="entry name" value="GPR"/>
    <property type="match status" value="1"/>
</dbReference>
<dbReference type="SUPFAM" id="SSF53720">
    <property type="entry name" value="ALDH-like"/>
    <property type="match status" value="1"/>
</dbReference>
<dbReference type="PROSITE" id="PS01223">
    <property type="entry name" value="PROA"/>
    <property type="match status" value="1"/>
</dbReference>
<organism>
    <name type="scientific">Geobacillus sp. (strain WCH70)</name>
    <dbReference type="NCBI Taxonomy" id="471223"/>
    <lineage>
        <taxon>Bacteria</taxon>
        <taxon>Bacillati</taxon>
        <taxon>Bacillota</taxon>
        <taxon>Bacilli</taxon>
        <taxon>Bacillales</taxon>
        <taxon>Anoxybacillaceae</taxon>
        <taxon>Geobacillus</taxon>
    </lineage>
</organism>
<protein>
    <recommendedName>
        <fullName evidence="1">Gamma-glutamyl phosphate reductase</fullName>
        <shortName evidence="1">GPR</shortName>
        <ecNumber evidence="1">1.2.1.41</ecNumber>
    </recommendedName>
    <alternativeName>
        <fullName evidence="1">Glutamate-5-semialdehyde dehydrogenase</fullName>
    </alternativeName>
    <alternativeName>
        <fullName evidence="1">Glutamyl-gamma-semialdehyde dehydrogenase</fullName>
        <shortName evidence="1">GSA dehydrogenase</shortName>
    </alternativeName>
</protein>
<evidence type="ECO:0000255" key="1">
    <source>
        <dbReference type="HAMAP-Rule" id="MF_00412"/>
    </source>
</evidence>
<comment type="function">
    <text evidence="1">Catalyzes the NADPH-dependent reduction of L-glutamate 5-phosphate into L-glutamate 5-semialdehyde and phosphate. The product spontaneously undergoes cyclization to form 1-pyrroline-5-carboxylate.</text>
</comment>
<comment type="catalytic activity">
    <reaction evidence="1">
        <text>L-glutamate 5-semialdehyde + phosphate + NADP(+) = L-glutamyl 5-phosphate + NADPH + H(+)</text>
        <dbReference type="Rhea" id="RHEA:19541"/>
        <dbReference type="ChEBI" id="CHEBI:15378"/>
        <dbReference type="ChEBI" id="CHEBI:43474"/>
        <dbReference type="ChEBI" id="CHEBI:57783"/>
        <dbReference type="ChEBI" id="CHEBI:58066"/>
        <dbReference type="ChEBI" id="CHEBI:58274"/>
        <dbReference type="ChEBI" id="CHEBI:58349"/>
        <dbReference type="EC" id="1.2.1.41"/>
    </reaction>
</comment>
<comment type="pathway">
    <text evidence="1">Amino-acid biosynthesis; L-proline biosynthesis; L-glutamate 5-semialdehyde from L-glutamate: step 2/2.</text>
</comment>
<comment type="subcellular location">
    <subcellularLocation>
        <location evidence="1">Cytoplasm</location>
    </subcellularLocation>
</comment>
<comment type="similarity">
    <text evidence="1">Belongs to the gamma-glutamyl phosphate reductase family.</text>
</comment>
<reference key="1">
    <citation type="submission" date="2009-06" db="EMBL/GenBank/DDBJ databases">
        <title>Complete sequence of chromosome of Geopacillus sp. WCH70.</title>
        <authorList>
            <consortium name="US DOE Joint Genome Institute"/>
            <person name="Lucas S."/>
            <person name="Copeland A."/>
            <person name="Lapidus A."/>
            <person name="Glavina del Rio T."/>
            <person name="Dalin E."/>
            <person name="Tice H."/>
            <person name="Bruce D."/>
            <person name="Goodwin L."/>
            <person name="Pitluck S."/>
            <person name="Chertkov O."/>
            <person name="Brettin T."/>
            <person name="Detter J.C."/>
            <person name="Han C."/>
            <person name="Larimer F."/>
            <person name="Land M."/>
            <person name="Hauser L."/>
            <person name="Kyrpides N."/>
            <person name="Mikhailova N."/>
            <person name="Brumm P."/>
            <person name="Mead D.A."/>
            <person name="Richardson P."/>
        </authorList>
    </citation>
    <scope>NUCLEOTIDE SEQUENCE [LARGE SCALE GENOMIC DNA]</scope>
    <source>
        <strain>WCH70</strain>
    </source>
</reference>
<proteinExistence type="inferred from homology"/>
<name>PROA_GEOSW</name>